<evidence type="ECO:0000250" key="1"/>
<evidence type="ECO:0000250" key="2">
    <source>
        <dbReference type="UniProtKB" id="P0A6U8"/>
    </source>
</evidence>
<evidence type="ECO:0000250" key="3">
    <source>
        <dbReference type="UniProtKB" id="Q0DEV5"/>
    </source>
</evidence>
<evidence type="ECO:0000255" key="4"/>
<evidence type="ECO:0000256" key="5">
    <source>
        <dbReference type="SAM" id="MobiDB-lite"/>
    </source>
</evidence>
<evidence type="ECO:0000269" key="6">
    <source>
    </source>
</evidence>
<evidence type="ECO:0000305" key="7"/>
<reference key="1">
    <citation type="journal article" date="1994" name="Sci. China, Ser. B, Chem. Life Sci. Earth Sci.">
        <title>Identification of two transposon-like elements in rice Wx gene.</title>
        <authorList>
            <person name="Wang Z.Y."/>
            <person name="Zheng F.Q."/>
            <person name="Gao J.P."/>
            <person name="Wang X.Q."/>
            <person name="Wu M."/>
            <person name="Zhang J.L."/>
            <person name="Hong M.M."/>
        </authorList>
    </citation>
    <scope>NUCLEOTIDE SEQUENCE [GENOMIC DNA]</scope>
</reference>
<reference key="2">
    <citation type="submission" date="2006-02" db="EMBL/GenBank/DDBJ databases">
        <authorList>
            <person name="Sun H.Q."/>
            <person name="Luo K."/>
        </authorList>
    </citation>
    <scope>NUCLEOTIDE SEQUENCE [GENOMIC DNA]</scope>
    <source>
        <strain>cv. Haomuxi</strain>
    </source>
</reference>
<reference key="3">
    <citation type="journal article" date="2005" name="PLoS Biol.">
        <title>The genomes of Oryza sativa: a history of duplications.</title>
        <authorList>
            <person name="Yu J."/>
            <person name="Wang J."/>
            <person name="Lin W."/>
            <person name="Li S."/>
            <person name="Li H."/>
            <person name="Zhou J."/>
            <person name="Ni P."/>
            <person name="Dong W."/>
            <person name="Hu S."/>
            <person name="Zeng C."/>
            <person name="Zhang J."/>
            <person name="Zhang Y."/>
            <person name="Li R."/>
            <person name="Xu Z."/>
            <person name="Li S."/>
            <person name="Li X."/>
            <person name="Zheng H."/>
            <person name="Cong L."/>
            <person name="Lin L."/>
            <person name="Yin J."/>
            <person name="Geng J."/>
            <person name="Li G."/>
            <person name="Shi J."/>
            <person name="Liu J."/>
            <person name="Lv H."/>
            <person name="Li J."/>
            <person name="Wang J."/>
            <person name="Deng Y."/>
            <person name="Ran L."/>
            <person name="Shi X."/>
            <person name="Wang X."/>
            <person name="Wu Q."/>
            <person name="Li C."/>
            <person name="Ren X."/>
            <person name="Wang J."/>
            <person name="Wang X."/>
            <person name="Li D."/>
            <person name="Liu D."/>
            <person name="Zhang X."/>
            <person name="Ji Z."/>
            <person name="Zhao W."/>
            <person name="Sun Y."/>
            <person name="Zhang Z."/>
            <person name="Bao J."/>
            <person name="Han Y."/>
            <person name="Dong L."/>
            <person name="Ji J."/>
            <person name="Chen P."/>
            <person name="Wu S."/>
            <person name="Liu J."/>
            <person name="Xiao Y."/>
            <person name="Bu D."/>
            <person name="Tan J."/>
            <person name="Yang L."/>
            <person name="Ye C."/>
            <person name="Zhang J."/>
            <person name="Xu J."/>
            <person name="Zhou Y."/>
            <person name="Yu Y."/>
            <person name="Zhang B."/>
            <person name="Zhuang S."/>
            <person name="Wei H."/>
            <person name="Liu B."/>
            <person name="Lei M."/>
            <person name="Yu H."/>
            <person name="Li Y."/>
            <person name="Xu H."/>
            <person name="Wei S."/>
            <person name="He X."/>
            <person name="Fang L."/>
            <person name="Zhang Z."/>
            <person name="Zhang Y."/>
            <person name="Huang X."/>
            <person name="Su Z."/>
            <person name="Tong W."/>
            <person name="Li J."/>
            <person name="Tong Z."/>
            <person name="Li S."/>
            <person name="Ye J."/>
            <person name="Wang L."/>
            <person name="Fang L."/>
            <person name="Lei T."/>
            <person name="Chen C.-S."/>
            <person name="Chen H.-C."/>
            <person name="Xu Z."/>
            <person name="Li H."/>
            <person name="Huang H."/>
            <person name="Zhang F."/>
            <person name="Xu H."/>
            <person name="Li N."/>
            <person name="Zhao C."/>
            <person name="Li S."/>
            <person name="Dong L."/>
            <person name="Huang Y."/>
            <person name="Li L."/>
            <person name="Xi Y."/>
            <person name="Qi Q."/>
            <person name="Li W."/>
            <person name="Zhang B."/>
            <person name="Hu W."/>
            <person name="Zhang Y."/>
            <person name="Tian X."/>
            <person name="Jiao Y."/>
            <person name="Liang X."/>
            <person name="Jin J."/>
            <person name="Gao L."/>
            <person name="Zheng W."/>
            <person name="Hao B."/>
            <person name="Liu S.-M."/>
            <person name="Wang W."/>
            <person name="Yuan L."/>
            <person name="Cao M."/>
            <person name="McDermott J."/>
            <person name="Samudrala R."/>
            <person name="Wang J."/>
            <person name="Wong G.K.-S."/>
            <person name="Yang H."/>
        </authorList>
    </citation>
    <scope>NUCLEOTIDE SEQUENCE [LARGE SCALE GENOMIC DNA]</scope>
    <source>
        <strain>cv. 93-11</strain>
    </source>
</reference>
<reference key="4">
    <citation type="journal article" date="2013" name="J. Agric. Food Chem.">
        <title>Identification of rice proteins recognized by the IgE antibodies of patients with food allergies.</title>
        <authorList>
            <person name="Golias J."/>
            <person name="Humlova Z."/>
            <person name="Halada P."/>
            <person name="Habova V."/>
            <person name="Janatkova I."/>
            <person name="Tuckova L."/>
        </authorList>
    </citation>
    <scope>IDENTIFICATION BY MASS SPECTROMETRY</scope>
    <scope>ALLERGEN</scope>
</reference>
<keyword id="KW-0020">Allergen</keyword>
<keyword id="KW-0035">Amyloplast</keyword>
<keyword id="KW-0150">Chloroplast</keyword>
<keyword id="KW-1015">Disulfide bond</keyword>
<keyword id="KW-0328">Glycosyltransferase</keyword>
<keyword id="KW-0934">Plastid</keyword>
<keyword id="KW-1185">Reference proteome</keyword>
<keyword id="KW-0750">Starch biosynthesis</keyword>
<keyword id="KW-0808">Transferase</keyword>
<keyword id="KW-0809">Transit peptide</keyword>
<name>SSG1_ORYSI</name>
<gene>
    <name type="primary">WAXY</name>
    <name type="synonym">WX</name>
    <name type="synonym">WX-B</name>
    <name type="ORF">OsI_020765</name>
</gene>
<accession>A2Y8X2</accession>
<accession>P19395</accession>
<accession>Q1ZZT5</accession>
<accession>Q43012</accession>
<accession>Q43013</accession>
<accession>Q71F57</accession>
<accession>Q8GZD6</accession>
<accession>Q8S9C4</accession>
<accession>Q94LY7</accession>
<accession>Q9S7R1</accession>
<accession>Q9S7U4</accession>
<dbReference type="EC" id="2.4.1.242"/>
<dbReference type="EMBL" id="X65183">
    <property type="protein sequence ID" value="CAA46294.1"/>
    <property type="molecule type" value="Genomic_DNA"/>
</dbReference>
<dbReference type="EMBL" id="DQ415640">
    <property type="protein sequence ID" value="ABD77490.1"/>
    <property type="molecule type" value="Genomic_DNA"/>
</dbReference>
<dbReference type="EMBL" id="CM000131">
    <property type="status" value="NOT_ANNOTATED_CDS"/>
    <property type="molecule type" value="Genomic_DNA"/>
</dbReference>
<dbReference type="SMR" id="A2Y8X2"/>
<dbReference type="STRING" id="39946.A2Y8X2"/>
<dbReference type="Allergome" id="11008">
    <property type="allergen name" value="Ory s GBSS_I"/>
</dbReference>
<dbReference type="CAZy" id="GT5">
    <property type="family name" value="Glycosyltransferase Family 5"/>
</dbReference>
<dbReference type="EnsemblPlants" id="BGIOSGA022241-TA">
    <property type="protein sequence ID" value="BGIOSGA022241-PA"/>
    <property type="gene ID" value="BGIOSGA022241"/>
</dbReference>
<dbReference type="Gramene" id="BGIOSGA022241-TA">
    <property type="protein sequence ID" value="BGIOSGA022241-PA"/>
    <property type="gene ID" value="BGIOSGA022241"/>
</dbReference>
<dbReference type="HOGENOM" id="CLU_009583_18_2_1"/>
<dbReference type="OMA" id="GTDYKDN"/>
<dbReference type="UniPathway" id="UPA00152"/>
<dbReference type="Proteomes" id="UP000007015">
    <property type="component" value="Chromosome 6"/>
</dbReference>
<dbReference type="ExpressionAtlas" id="A2Y8X2">
    <property type="expression patterns" value="differential"/>
</dbReference>
<dbReference type="GO" id="GO:0009501">
    <property type="term" value="C:amyloplast"/>
    <property type="evidence" value="ECO:0007669"/>
    <property type="project" value="UniProtKB-SubCell"/>
</dbReference>
<dbReference type="GO" id="GO:0009507">
    <property type="term" value="C:chloroplast"/>
    <property type="evidence" value="ECO:0007669"/>
    <property type="project" value="UniProtKB-SubCell"/>
</dbReference>
<dbReference type="GO" id="GO:0043531">
    <property type="term" value="F:ADP binding"/>
    <property type="evidence" value="ECO:0007669"/>
    <property type="project" value="EnsemblPlants"/>
</dbReference>
<dbReference type="GO" id="GO:0004373">
    <property type="term" value="F:alpha-1,4-glucan glucosyltransferase (UDP-glucose donor) activity"/>
    <property type="evidence" value="ECO:0007669"/>
    <property type="project" value="InterPro"/>
</dbReference>
<dbReference type="GO" id="GO:0019863">
    <property type="term" value="F:IgE binding"/>
    <property type="evidence" value="ECO:0000314"/>
    <property type="project" value="UniProtKB"/>
</dbReference>
<dbReference type="GO" id="GO:0019252">
    <property type="term" value="P:starch biosynthetic process"/>
    <property type="evidence" value="ECO:0007669"/>
    <property type="project" value="UniProtKB-UniPathway"/>
</dbReference>
<dbReference type="CDD" id="cd03791">
    <property type="entry name" value="GT5_Glycogen_synthase_DULL1-like"/>
    <property type="match status" value="1"/>
</dbReference>
<dbReference type="FunFam" id="3.40.50.2000:FF:000073">
    <property type="entry name" value="Starch synthase, chloroplastic/amyloplastic"/>
    <property type="match status" value="1"/>
</dbReference>
<dbReference type="FunFam" id="3.40.50.2000:FF:000090">
    <property type="entry name" value="Starch synthase, chloroplastic/amyloplastic"/>
    <property type="match status" value="1"/>
</dbReference>
<dbReference type="Gene3D" id="3.40.50.2000">
    <property type="entry name" value="Glycogen Phosphorylase B"/>
    <property type="match status" value="2"/>
</dbReference>
<dbReference type="HAMAP" id="MF_00484">
    <property type="entry name" value="Glycogen_synth"/>
    <property type="match status" value="1"/>
</dbReference>
<dbReference type="InterPro" id="IPR001296">
    <property type="entry name" value="Glyco_trans_1"/>
</dbReference>
<dbReference type="InterPro" id="IPR011835">
    <property type="entry name" value="GS/SS"/>
</dbReference>
<dbReference type="InterPro" id="IPR013534">
    <property type="entry name" value="Starch_synth_cat_dom"/>
</dbReference>
<dbReference type="NCBIfam" id="TIGR02095">
    <property type="entry name" value="glgA"/>
    <property type="match status" value="1"/>
</dbReference>
<dbReference type="PANTHER" id="PTHR45825">
    <property type="entry name" value="GRANULE-BOUND STARCH SYNTHASE 1, CHLOROPLASTIC/AMYLOPLASTIC"/>
    <property type="match status" value="1"/>
</dbReference>
<dbReference type="PANTHER" id="PTHR45825:SF3">
    <property type="entry name" value="GRANULE-BOUND STARCH SYNTHASE 1, CHLOROPLASTIC_AMYLOPLASTIC"/>
    <property type="match status" value="1"/>
</dbReference>
<dbReference type="Pfam" id="PF08323">
    <property type="entry name" value="Glyco_transf_5"/>
    <property type="match status" value="1"/>
</dbReference>
<dbReference type="Pfam" id="PF00534">
    <property type="entry name" value="Glycos_transf_1"/>
    <property type="match status" value="1"/>
</dbReference>
<dbReference type="SUPFAM" id="SSF53756">
    <property type="entry name" value="UDP-Glycosyltransferase/glycogen phosphorylase"/>
    <property type="match status" value="1"/>
</dbReference>
<sequence>MSALTTSQLATSATGFGIADRSAPSSLLRHGFQGLKPRSPAGGDATSLSVTTSARATPKQQRSVQRGSRRFPSVVVYATGAGMNVVFVGAEMAPWSKTGGLGDVLGGLPPAMAANGHRVMVISPRYDQYKDAWDTSVVAEIKVADRYERVRFFHCYKRGVDRVFIDHPSFLEKVWGKTGEKIYGPDTGVDYKDNQMRFSLLCQAALEAPRILNLNNNPYFKGTYGEDVVFVCNDWHTGPLASYLKNNYQPNGIYRNAKVAFCIHNISYQGRFAFEDYPELNLSERFRSSFDFIDGYDTPVEGRKINWMKAGILEADRVLTVSPYYAEELISGIARGCELDNIMRLTGITGIVNGMDVSEWDPSKDKYITAKYDATTAIEAKALNKEALQAEAGLPVDRKIPLIAFIGRLEEQKGPDVMAAAIPELMQEDVQIVLLGTGKKKFEKLLKSMEEKYPGKVRAVVKFNAPLAHLIMAGADVLAVPSRFEPCGLIQLQGMRYGTPCACASTGGLVDTVIEGKTGFHMGRLSVDCKVVEPSDVKKVAATLKRAIKVVGTPAYEEMVRNCMNQDLSWKGPAKNWENVLLGLGVAGSAPGIEGDEIAPLAKENVAAP</sequence>
<comment type="function">
    <text evidence="1">Required for the synthesis of amylose in endosperm.</text>
</comment>
<comment type="catalytic activity">
    <reaction>
        <text>an NDP-alpha-D-glucose + [(1-&gt;4)-alpha-D-glucosyl](n) = [(1-&gt;4)-alpha-D-glucosyl](n+1) + a ribonucleoside 5'-diphosphate + H(+)</text>
        <dbReference type="Rhea" id="RHEA:15873"/>
        <dbReference type="Rhea" id="RHEA-COMP:9584"/>
        <dbReference type="Rhea" id="RHEA-COMP:9587"/>
        <dbReference type="ChEBI" id="CHEBI:15378"/>
        <dbReference type="ChEBI" id="CHEBI:15444"/>
        <dbReference type="ChEBI" id="CHEBI:57930"/>
        <dbReference type="ChEBI" id="CHEBI:76533"/>
        <dbReference type="EC" id="2.4.1.242"/>
    </reaction>
</comment>
<comment type="pathway">
    <text>Glycan biosynthesis; starch biosynthesis.</text>
</comment>
<comment type="subcellular location">
    <subcellularLocation>
        <location>Plastid</location>
        <location>Chloroplast</location>
    </subcellularLocation>
    <subcellularLocation>
        <location>Plastid</location>
        <location>Amyloplast</location>
    </subcellularLocation>
    <text evidence="1">Amyloplast or chloroplast, granule-bound.</text>
</comment>
<comment type="allergen">
    <text evidence="6">Causes an allergic reaction in human. Binds to IgE.</text>
</comment>
<comment type="similarity">
    <text evidence="7">Belongs to the glycosyltransferase 1 family. Bacterial/plant glycogen synthase subfamily.</text>
</comment>
<feature type="transit peptide" description="Chloroplast" evidence="4">
    <location>
        <begin position="1"/>
        <end position="77"/>
    </location>
</feature>
<feature type="chain" id="PRO_0000295649" description="Granule-bound starch synthase 1, chloroplastic/amyloplastic">
    <location>
        <begin position="78"/>
        <end position="609"/>
    </location>
</feature>
<feature type="region of interest" description="Disordered" evidence="5">
    <location>
        <begin position="29"/>
        <end position="67"/>
    </location>
</feature>
<feature type="compositionally biased region" description="Polar residues" evidence="5">
    <location>
        <begin position="46"/>
        <end position="66"/>
    </location>
</feature>
<feature type="binding site" evidence="2">
    <location>
        <position position="97"/>
    </location>
    <ligand>
        <name>ADP-alpha-D-glucose</name>
        <dbReference type="ChEBI" id="CHEBI:57498"/>
    </ligand>
</feature>
<feature type="binding site" evidence="3">
    <location>
        <position position="100"/>
    </location>
    <ligand>
        <name>ADP</name>
        <dbReference type="ChEBI" id="CHEBI:456216"/>
    </ligand>
</feature>
<feature type="binding site" evidence="3">
    <location>
        <position position="408"/>
    </location>
    <ligand>
        <name>ADP</name>
        <dbReference type="ChEBI" id="CHEBI:456216"/>
    </ligand>
</feature>
<feature type="binding site" evidence="3">
    <location>
        <position position="413"/>
    </location>
    <ligand>
        <name>ADP</name>
        <dbReference type="ChEBI" id="CHEBI:456216"/>
    </ligand>
</feature>
<feature type="binding site" evidence="3">
    <location>
        <position position="462"/>
    </location>
    <ligand>
        <name>ADP</name>
        <dbReference type="ChEBI" id="CHEBI:456216"/>
    </ligand>
</feature>
<feature type="binding site" evidence="3">
    <location>
        <position position="493"/>
    </location>
    <ligand>
        <name>ADP</name>
        <dbReference type="ChEBI" id="CHEBI:456216"/>
    </ligand>
</feature>
<feature type="disulfide bond" evidence="3">
    <location>
        <begin position="337"/>
        <end position="529"/>
    </location>
</feature>
<feature type="sequence variant" description="In strain: cv. Haomuxi.">
    <original>P</original>
    <variation>S</variation>
    <location>
        <position position="415"/>
    </location>
</feature>
<feature type="sequence conflict" description="In Ref. 2; ABD77490." evidence="7" ref="2">
    <original>D</original>
    <variation>G</variation>
    <location>
        <position position="166"/>
    </location>
</feature>
<organism>
    <name type="scientific">Oryza sativa subsp. indica</name>
    <name type="common">Rice</name>
    <dbReference type="NCBI Taxonomy" id="39946"/>
    <lineage>
        <taxon>Eukaryota</taxon>
        <taxon>Viridiplantae</taxon>
        <taxon>Streptophyta</taxon>
        <taxon>Embryophyta</taxon>
        <taxon>Tracheophyta</taxon>
        <taxon>Spermatophyta</taxon>
        <taxon>Magnoliopsida</taxon>
        <taxon>Liliopsida</taxon>
        <taxon>Poales</taxon>
        <taxon>Poaceae</taxon>
        <taxon>BOP clade</taxon>
        <taxon>Oryzoideae</taxon>
        <taxon>Oryzeae</taxon>
        <taxon>Oryzinae</taxon>
        <taxon>Oryza</taxon>
        <taxon>Oryza sativa</taxon>
    </lineage>
</organism>
<protein>
    <recommendedName>
        <fullName>Granule-bound starch synthase 1, chloroplastic/amyloplastic</fullName>
        <ecNumber>2.4.1.242</ecNumber>
    </recommendedName>
    <alternativeName>
        <fullName>Granule-bound starch synthase I</fullName>
        <shortName>GBSS-I</shortName>
    </alternativeName>
    <allergenName>Ory s GBSS_I</allergenName>
</protein>
<proteinExistence type="evidence at protein level"/>